<dbReference type="EMBL" id="L35475">
    <property type="protein sequence ID" value="AAB36567.1"/>
    <property type="molecule type" value="Genomic_DNA"/>
</dbReference>
<dbReference type="EMBL" id="AF211939">
    <property type="protein sequence ID" value="AAF98751.1"/>
    <property type="molecule type" value="Genomic_DNA"/>
</dbReference>
<dbReference type="EMBL" id="AF211940">
    <property type="protein sequence ID" value="AAF98752.1"/>
    <property type="molecule type" value="Genomic_DNA"/>
</dbReference>
<dbReference type="EMBL" id="AF211941">
    <property type="protein sequence ID" value="AAF98753.1"/>
    <property type="molecule type" value="Genomic_DNA"/>
</dbReference>
<dbReference type="EMBL" id="AF211942">
    <property type="protein sequence ID" value="AAF98754.1"/>
    <property type="molecule type" value="Genomic_DNA"/>
</dbReference>
<dbReference type="EMBL" id="AB065965">
    <property type="protein sequence ID" value="BAC06177.1"/>
    <property type="molecule type" value="Genomic_DNA"/>
</dbReference>
<dbReference type="EMBL" id="AL031983">
    <property type="protein sequence ID" value="CAA21455.1"/>
    <property type="molecule type" value="Genomic_DNA"/>
</dbReference>
<dbReference type="EMBL" id="AL645936">
    <property type="status" value="NOT_ANNOTATED_CDS"/>
    <property type="molecule type" value="Genomic_DNA"/>
</dbReference>
<dbReference type="EMBL" id="AL662826">
    <property type="status" value="NOT_ANNOTATED_CDS"/>
    <property type="molecule type" value="Genomic_DNA"/>
</dbReference>
<dbReference type="EMBL" id="BX000688">
    <property type="status" value="NOT_ANNOTATED_CDS"/>
    <property type="molecule type" value="Genomic_DNA"/>
</dbReference>
<dbReference type="EMBL" id="BX927223">
    <property type="status" value="NOT_ANNOTATED_CDS"/>
    <property type="molecule type" value="Genomic_DNA"/>
</dbReference>
<dbReference type="EMBL" id="CR759766">
    <property type="status" value="NOT_ANNOTATED_CDS"/>
    <property type="molecule type" value="Genomic_DNA"/>
</dbReference>
<dbReference type="EMBL" id="CR759870">
    <property type="status" value="NOT_ANNOTATED_CDS"/>
    <property type="molecule type" value="Genomic_DNA"/>
</dbReference>
<dbReference type="EMBL" id="CR788300">
    <property type="status" value="NOT_ANNOTATED_CDS"/>
    <property type="molecule type" value="Genomic_DNA"/>
</dbReference>
<dbReference type="EMBL" id="CH471081">
    <property type="protein sequence ID" value="EAX03204.1"/>
    <property type="molecule type" value="Genomic_DNA"/>
</dbReference>
<dbReference type="EMBL" id="BC069146">
    <property type="protein sequence ID" value="AAH69146.1"/>
    <property type="molecule type" value="mRNA"/>
</dbReference>
<dbReference type="EMBL" id="BC101683">
    <property type="protein sequence ID" value="AAI01684.1"/>
    <property type="molecule type" value="mRNA"/>
</dbReference>
<dbReference type="EMBL" id="BC112176">
    <property type="protein sequence ID" value="AAI12177.1"/>
    <property type="molecule type" value="mRNA"/>
</dbReference>
<dbReference type="EMBL" id="AF399631">
    <property type="protein sequence ID" value="AAK95116.1"/>
    <property type="molecule type" value="Genomic_DNA"/>
</dbReference>
<dbReference type="EMBL" id="BK004225">
    <property type="protein sequence ID" value="DAA04623.1"/>
    <property type="molecule type" value="Genomic_DNA"/>
</dbReference>
<dbReference type="CCDS" id="CCDS34365.1"/>
<dbReference type="PIR" id="A57069">
    <property type="entry name" value="A57069"/>
</dbReference>
<dbReference type="RefSeq" id="NP_009091.3">
    <property type="nucleotide sequence ID" value="NM_007160.3"/>
</dbReference>
<dbReference type="SMR" id="O95918"/>
<dbReference type="BioGRID" id="113659">
    <property type="interactions" value="19"/>
</dbReference>
<dbReference type="FunCoup" id="O95918">
    <property type="interactions" value="453"/>
</dbReference>
<dbReference type="IntAct" id="O95918">
    <property type="interactions" value="2"/>
</dbReference>
<dbReference type="STRING" id="9606.ENSP00000492959"/>
<dbReference type="GlyCosmos" id="O95918">
    <property type="glycosylation" value="1 site, No reported glycans"/>
</dbReference>
<dbReference type="GlyGen" id="O95918">
    <property type="glycosylation" value="2 sites"/>
</dbReference>
<dbReference type="iPTMnet" id="O95918"/>
<dbReference type="PhosphoSitePlus" id="O95918"/>
<dbReference type="BioMuta" id="OR2H2"/>
<dbReference type="jPOST" id="O95918"/>
<dbReference type="PaxDb" id="9606-ENSP00000373136"/>
<dbReference type="Antibodypedia" id="50754">
    <property type="antibodies" value="105 antibodies from 19 providers"/>
</dbReference>
<dbReference type="DNASU" id="7932"/>
<dbReference type="Ensembl" id="ENST00000376947.6">
    <property type="protein sequence ID" value="ENSP00000366146.5"/>
    <property type="gene ID" value="ENSG00000206512.6"/>
</dbReference>
<dbReference type="Ensembl" id="ENST00000383546.6">
    <property type="protein sequence ID" value="ENSP00000373038.5"/>
    <property type="gene ID" value="ENSG00000206467.6"/>
</dbReference>
<dbReference type="Ensembl" id="ENST00000383640.4">
    <property type="protein sequence ID" value="ENSP00000373136.2"/>
    <property type="gene ID" value="ENSG00000204657.4"/>
</dbReference>
<dbReference type="Ensembl" id="ENST00000411574.4">
    <property type="protein sequence ID" value="ENSP00000410227.3"/>
    <property type="gene ID" value="ENSG00000229680.4"/>
</dbReference>
<dbReference type="Ensembl" id="ENST00000439874.4">
    <property type="protein sequence ID" value="ENSP00000403604.3"/>
    <property type="gene ID" value="ENSG00000229185.4"/>
</dbReference>
<dbReference type="Ensembl" id="ENST00000453513.4">
    <property type="protein sequence ID" value="ENSP00000414688.3"/>
    <property type="gene ID" value="ENSG00000224319.4"/>
</dbReference>
<dbReference type="Ensembl" id="ENST00000454628.4">
    <property type="protein sequence ID" value="ENSP00000409339.3"/>
    <property type="gene ID" value="ENSG00000227044.4"/>
</dbReference>
<dbReference type="Ensembl" id="ENST00000641840.1">
    <property type="protein sequence ID" value="ENSP00000492959.1"/>
    <property type="gene ID" value="ENSG00000204657.4"/>
</dbReference>
<dbReference type="GeneID" id="7932"/>
<dbReference type="KEGG" id="hsa:7932"/>
<dbReference type="MANE-Select" id="ENST00000641840.1">
    <property type="protein sequence ID" value="ENSP00000492959.1"/>
    <property type="RefSeq nucleotide sequence ID" value="NM_007160.4"/>
    <property type="RefSeq protein sequence ID" value="NP_009091.3"/>
</dbReference>
<dbReference type="UCSC" id="uc003nmr.2">
    <property type="organism name" value="human"/>
</dbReference>
<dbReference type="AGR" id="HGNC:8253"/>
<dbReference type="CTD" id="7932"/>
<dbReference type="DisGeNET" id="7932"/>
<dbReference type="GeneCards" id="OR2H2"/>
<dbReference type="HGNC" id="HGNC:8253">
    <property type="gene designation" value="OR2H2"/>
</dbReference>
<dbReference type="HPA" id="ENSG00000204657">
    <property type="expression patterns" value="Tissue enhanced (brain, epididymis, testis)"/>
</dbReference>
<dbReference type="MIM" id="600578">
    <property type="type" value="gene"/>
</dbReference>
<dbReference type="neXtProt" id="NX_O95918"/>
<dbReference type="OpenTargets" id="ENSG00000204657"/>
<dbReference type="PharmGKB" id="PA32162"/>
<dbReference type="VEuPathDB" id="HostDB:ENSG00000204657"/>
<dbReference type="eggNOG" id="ENOG502TAH4">
    <property type="taxonomic scope" value="Eukaryota"/>
</dbReference>
<dbReference type="GeneTree" id="ENSGT01130000278266"/>
<dbReference type="HOGENOM" id="CLU_012526_1_2_1"/>
<dbReference type="InParanoid" id="O95918"/>
<dbReference type="OMA" id="PYAQDQG"/>
<dbReference type="OrthoDB" id="9480643at2759"/>
<dbReference type="PAN-GO" id="O95918">
    <property type="GO annotations" value="0 GO annotations based on evolutionary models"/>
</dbReference>
<dbReference type="PhylomeDB" id="O95918"/>
<dbReference type="TreeFam" id="TF336512"/>
<dbReference type="PathwayCommons" id="O95918"/>
<dbReference type="Reactome" id="R-HSA-9752946">
    <property type="pathway name" value="Expression and translocation of olfactory receptors"/>
</dbReference>
<dbReference type="BioGRID-ORCS" id="7932">
    <property type="hits" value="6 hits in 687 CRISPR screens"/>
</dbReference>
<dbReference type="GeneWiki" id="OR2H2"/>
<dbReference type="GenomeRNAi" id="7932"/>
<dbReference type="Pharos" id="O95918">
    <property type="development level" value="Tbio"/>
</dbReference>
<dbReference type="PRO" id="PR:O95918"/>
<dbReference type="Proteomes" id="UP000005640">
    <property type="component" value="Chromosome 6"/>
</dbReference>
<dbReference type="RNAct" id="O95918">
    <property type="molecule type" value="protein"/>
</dbReference>
<dbReference type="Bgee" id="ENSG00000204657">
    <property type="expression patterns" value="Expressed in male germ line stem cell (sensu Vertebrata) in testis and 56 other cell types or tissues"/>
</dbReference>
<dbReference type="ExpressionAtlas" id="O95918">
    <property type="expression patterns" value="baseline and differential"/>
</dbReference>
<dbReference type="GO" id="GO:0005886">
    <property type="term" value="C:plasma membrane"/>
    <property type="evidence" value="ECO:0000318"/>
    <property type="project" value="GO_Central"/>
</dbReference>
<dbReference type="GO" id="GO:0004930">
    <property type="term" value="F:G protein-coupled receptor activity"/>
    <property type="evidence" value="ECO:0007669"/>
    <property type="project" value="UniProtKB-KW"/>
</dbReference>
<dbReference type="GO" id="GO:0004984">
    <property type="term" value="F:olfactory receptor activity"/>
    <property type="evidence" value="ECO:0000318"/>
    <property type="project" value="GO_Central"/>
</dbReference>
<dbReference type="GO" id="GO:0006952">
    <property type="term" value="P:defense response"/>
    <property type="evidence" value="ECO:0000304"/>
    <property type="project" value="ProtInc"/>
</dbReference>
<dbReference type="GO" id="GO:0050911">
    <property type="term" value="P:detection of chemical stimulus involved in sensory perception of smell"/>
    <property type="evidence" value="ECO:0000318"/>
    <property type="project" value="GO_Central"/>
</dbReference>
<dbReference type="GO" id="GO:0007618">
    <property type="term" value="P:mating"/>
    <property type="evidence" value="ECO:0000304"/>
    <property type="project" value="ProtInc"/>
</dbReference>
<dbReference type="CDD" id="cd15947">
    <property type="entry name" value="7tmA_OR2B-like"/>
    <property type="match status" value="1"/>
</dbReference>
<dbReference type="FunFam" id="1.10.1220.70:FF:000001">
    <property type="entry name" value="Olfactory receptor"/>
    <property type="match status" value="1"/>
</dbReference>
<dbReference type="FunFam" id="1.20.1070.10:FF:000005">
    <property type="entry name" value="Olfactory receptor"/>
    <property type="match status" value="1"/>
</dbReference>
<dbReference type="Gene3D" id="1.20.1070.10">
    <property type="entry name" value="Rhodopsin 7-helix transmembrane proteins"/>
    <property type="match status" value="1"/>
</dbReference>
<dbReference type="InterPro" id="IPR000276">
    <property type="entry name" value="GPCR_Rhodpsn"/>
</dbReference>
<dbReference type="InterPro" id="IPR017452">
    <property type="entry name" value="GPCR_Rhodpsn_7TM"/>
</dbReference>
<dbReference type="InterPro" id="IPR000725">
    <property type="entry name" value="Olfact_rcpt"/>
</dbReference>
<dbReference type="PANTHER" id="PTHR26453">
    <property type="entry name" value="OLFACTORY RECEPTOR"/>
    <property type="match status" value="1"/>
</dbReference>
<dbReference type="Pfam" id="PF13853">
    <property type="entry name" value="7tm_4"/>
    <property type="match status" value="1"/>
</dbReference>
<dbReference type="PRINTS" id="PR00237">
    <property type="entry name" value="GPCRRHODOPSN"/>
</dbReference>
<dbReference type="PRINTS" id="PR00245">
    <property type="entry name" value="OLFACTORYR"/>
</dbReference>
<dbReference type="SUPFAM" id="SSF81321">
    <property type="entry name" value="Family A G protein-coupled receptor-like"/>
    <property type="match status" value="1"/>
</dbReference>
<dbReference type="PROSITE" id="PS00237">
    <property type="entry name" value="G_PROTEIN_RECEP_F1_1"/>
    <property type="match status" value="1"/>
</dbReference>
<dbReference type="PROSITE" id="PS50262">
    <property type="entry name" value="G_PROTEIN_RECEP_F1_2"/>
    <property type="match status" value="1"/>
</dbReference>
<reference key="1">
    <citation type="journal article" date="1995" name="Genomics">
        <title>Olfactory receptor-like genes are located in the human major histocompatibility complex.</title>
        <authorList>
            <person name="Fan W."/>
            <person name="Liu Y.-C."/>
            <person name="Parimoo S."/>
            <person name="Weissman S.M."/>
        </authorList>
    </citation>
    <scope>NUCLEOTIDE SEQUENCE [GENOMIC DNA]</scope>
    <scope>VARIANT ILE-30</scope>
</reference>
<reference key="2">
    <citation type="journal article" date="2000" name="Hum. Immunol.">
        <title>Polymorphisms in the HLA-linked olfactory receptor genes in the Hutterites.</title>
        <authorList>
            <person name="Eklund A.C."/>
            <person name="Belchak M.M."/>
            <person name="Lapidos K."/>
            <person name="Raha-Chowdhury R."/>
            <person name="Ober C."/>
        </authorList>
    </citation>
    <scope>NUCLEOTIDE SEQUENCE [GENOMIC DNA]</scope>
    <scope>VARIANTS SER-30; PHE-30; VAL-48 AND ALA-220</scope>
</reference>
<reference key="3">
    <citation type="submission" date="2001-07" db="EMBL/GenBank/DDBJ databases">
        <title>Genome-wide discovery and analysis of human seven transmembrane helix receptor genes.</title>
        <authorList>
            <person name="Suwa M."/>
            <person name="Sato T."/>
            <person name="Okouchi I."/>
            <person name="Arita M."/>
            <person name="Futami K."/>
            <person name="Matsumoto S."/>
            <person name="Tsutsumi S."/>
            <person name="Aburatani H."/>
            <person name="Asai K."/>
            <person name="Akiyama Y."/>
        </authorList>
    </citation>
    <scope>NUCLEOTIDE SEQUENCE [GENOMIC DNA]</scope>
    <scope>VARIANT PHE-30</scope>
</reference>
<reference key="4">
    <citation type="journal article" date="2003" name="Nature">
        <title>The DNA sequence and analysis of human chromosome 6.</title>
        <authorList>
            <person name="Mungall A.J."/>
            <person name="Palmer S.A."/>
            <person name="Sims S.K."/>
            <person name="Edwards C.A."/>
            <person name="Ashurst J.L."/>
            <person name="Wilming L."/>
            <person name="Jones M.C."/>
            <person name="Horton R."/>
            <person name="Hunt S.E."/>
            <person name="Scott C.E."/>
            <person name="Gilbert J.G.R."/>
            <person name="Clamp M.E."/>
            <person name="Bethel G."/>
            <person name="Milne S."/>
            <person name="Ainscough R."/>
            <person name="Almeida J.P."/>
            <person name="Ambrose K.D."/>
            <person name="Andrews T.D."/>
            <person name="Ashwell R.I.S."/>
            <person name="Babbage A.K."/>
            <person name="Bagguley C.L."/>
            <person name="Bailey J."/>
            <person name="Banerjee R."/>
            <person name="Barker D.J."/>
            <person name="Barlow K.F."/>
            <person name="Bates K."/>
            <person name="Beare D.M."/>
            <person name="Beasley H."/>
            <person name="Beasley O."/>
            <person name="Bird C.P."/>
            <person name="Blakey S.E."/>
            <person name="Bray-Allen S."/>
            <person name="Brook J."/>
            <person name="Brown A.J."/>
            <person name="Brown J.Y."/>
            <person name="Burford D.C."/>
            <person name="Burrill W."/>
            <person name="Burton J."/>
            <person name="Carder C."/>
            <person name="Carter N.P."/>
            <person name="Chapman J.C."/>
            <person name="Clark S.Y."/>
            <person name="Clark G."/>
            <person name="Clee C.M."/>
            <person name="Clegg S."/>
            <person name="Cobley V."/>
            <person name="Collier R.E."/>
            <person name="Collins J.E."/>
            <person name="Colman L.K."/>
            <person name="Corby N.R."/>
            <person name="Coville G.J."/>
            <person name="Culley K.M."/>
            <person name="Dhami P."/>
            <person name="Davies J."/>
            <person name="Dunn M."/>
            <person name="Earthrowl M.E."/>
            <person name="Ellington A.E."/>
            <person name="Evans K.A."/>
            <person name="Faulkner L."/>
            <person name="Francis M.D."/>
            <person name="Frankish A."/>
            <person name="Frankland J."/>
            <person name="French L."/>
            <person name="Garner P."/>
            <person name="Garnett J."/>
            <person name="Ghori M.J."/>
            <person name="Gilby L.M."/>
            <person name="Gillson C.J."/>
            <person name="Glithero R.J."/>
            <person name="Grafham D.V."/>
            <person name="Grant M."/>
            <person name="Gribble S."/>
            <person name="Griffiths C."/>
            <person name="Griffiths M.N.D."/>
            <person name="Hall R."/>
            <person name="Halls K.S."/>
            <person name="Hammond S."/>
            <person name="Harley J.L."/>
            <person name="Hart E.A."/>
            <person name="Heath P.D."/>
            <person name="Heathcott R."/>
            <person name="Holmes S.J."/>
            <person name="Howden P.J."/>
            <person name="Howe K.L."/>
            <person name="Howell G.R."/>
            <person name="Huckle E."/>
            <person name="Humphray S.J."/>
            <person name="Humphries M.D."/>
            <person name="Hunt A.R."/>
            <person name="Johnson C.M."/>
            <person name="Joy A.A."/>
            <person name="Kay M."/>
            <person name="Keenan S.J."/>
            <person name="Kimberley A.M."/>
            <person name="King A."/>
            <person name="Laird G.K."/>
            <person name="Langford C."/>
            <person name="Lawlor S."/>
            <person name="Leongamornlert D.A."/>
            <person name="Leversha M."/>
            <person name="Lloyd C.R."/>
            <person name="Lloyd D.M."/>
            <person name="Loveland J.E."/>
            <person name="Lovell J."/>
            <person name="Martin S."/>
            <person name="Mashreghi-Mohammadi M."/>
            <person name="Maslen G.L."/>
            <person name="Matthews L."/>
            <person name="McCann O.T."/>
            <person name="McLaren S.J."/>
            <person name="McLay K."/>
            <person name="McMurray A."/>
            <person name="Moore M.J.F."/>
            <person name="Mullikin J.C."/>
            <person name="Niblett D."/>
            <person name="Nickerson T."/>
            <person name="Novik K.L."/>
            <person name="Oliver K."/>
            <person name="Overton-Larty E.K."/>
            <person name="Parker A."/>
            <person name="Patel R."/>
            <person name="Pearce A.V."/>
            <person name="Peck A.I."/>
            <person name="Phillimore B.J.C.T."/>
            <person name="Phillips S."/>
            <person name="Plumb R.W."/>
            <person name="Porter K.M."/>
            <person name="Ramsey Y."/>
            <person name="Ranby S.A."/>
            <person name="Rice C.M."/>
            <person name="Ross M.T."/>
            <person name="Searle S.M."/>
            <person name="Sehra H.K."/>
            <person name="Sheridan E."/>
            <person name="Skuce C.D."/>
            <person name="Smith S."/>
            <person name="Smith M."/>
            <person name="Spraggon L."/>
            <person name="Squares S.L."/>
            <person name="Steward C.A."/>
            <person name="Sycamore N."/>
            <person name="Tamlyn-Hall G."/>
            <person name="Tester J."/>
            <person name="Theaker A.J."/>
            <person name="Thomas D.W."/>
            <person name="Thorpe A."/>
            <person name="Tracey A."/>
            <person name="Tromans A."/>
            <person name="Tubby B."/>
            <person name="Wall M."/>
            <person name="Wallis J.M."/>
            <person name="West A.P."/>
            <person name="White S.S."/>
            <person name="Whitehead S.L."/>
            <person name="Whittaker H."/>
            <person name="Wild A."/>
            <person name="Willey D.J."/>
            <person name="Wilmer T.E."/>
            <person name="Wood J.M."/>
            <person name="Wray P.W."/>
            <person name="Wyatt J.C."/>
            <person name="Young L."/>
            <person name="Younger R.M."/>
            <person name="Bentley D.R."/>
            <person name="Coulson A."/>
            <person name="Durbin R.M."/>
            <person name="Hubbard T."/>
            <person name="Sulston J.E."/>
            <person name="Dunham I."/>
            <person name="Rogers J."/>
            <person name="Beck S."/>
        </authorList>
    </citation>
    <scope>NUCLEOTIDE SEQUENCE [LARGE SCALE GENOMIC DNA]</scope>
    <scope>VARIANTS PHE-30 AND VAL-48</scope>
</reference>
<reference key="5">
    <citation type="submission" date="2005-07" db="EMBL/GenBank/DDBJ databases">
        <authorList>
            <person name="Mural R.J."/>
            <person name="Istrail S."/>
            <person name="Sutton G.G."/>
            <person name="Florea L."/>
            <person name="Halpern A.L."/>
            <person name="Mobarry C.M."/>
            <person name="Lippert R."/>
            <person name="Walenz B."/>
            <person name="Shatkay H."/>
            <person name="Dew I."/>
            <person name="Miller J.R."/>
            <person name="Flanigan M.J."/>
            <person name="Edwards N.J."/>
            <person name="Bolanos R."/>
            <person name="Fasulo D."/>
            <person name="Halldorsson B.V."/>
            <person name="Hannenhalli S."/>
            <person name="Turner R."/>
            <person name="Yooseph S."/>
            <person name="Lu F."/>
            <person name="Nusskern D.R."/>
            <person name="Shue B.C."/>
            <person name="Zheng X.H."/>
            <person name="Zhong F."/>
            <person name="Delcher A.L."/>
            <person name="Huson D.H."/>
            <person name="Kravitz S.A."/>
            <person name="Mouchard L."/>
            <person name="Reinert K."/>
            <person name="Remington K.A."/>
            <person name="Clark A.G."/>
            <person name="Waterman M.S."/>
            <person name="Eichler E.E."/>
            <person name="Adams M.D."/>
            <person name="Hunkapiller M.W."/>
            <person name="Myers E.W."/>
            <person name="Venter J.C."/>
        </authorList>
    </citation>
    <scope>NUCLEOTIDE SEQUENCE [LARGE SCALE GENOMIC DNA]</scope>
</reference>
<reference key="6">
    <citation type="journal article" date="2004" name="Genome Res.">
        <title>The status, quality, and expansion of the NIH full-length cDNA project: the Mammalian Gene Collection (MGC).</title>
        <authorList>
            <consortium name="The MGC Project Team"/>
        </authorList>
    </citation>
    <scope>NUCLEOTIDE SEQUENCE [LARGE SCALE MRNA]</scope>
    <scope>VARIANT PHE-30</scope>
    <source>
        <tissue>Brain cortex</tissue>
    </source>
</reference>
<reference key="7">
    <citation type="journal article" date="2002" name="Genomics">
        <title>DEFOG: a practical scheme for deciphering families of genes.</title>
        <authorList>
            <person name="Fuchs T."/>
            <person name="Malecova B."/>
            <person name="Linhart C."/>
            <person name="Sharan R."/>
            <person name="Khen M."/>
            <person name="Herwig R."/>
            <person name="Shmulevich D."/>
            <person name="Elkon R."/>
            <person name="Steinfath M."/>
            <person name="O'Brien J.K."/>
            <person name="Radelof U."/>
            <person name="Lehrach H."/>
            <person name="Lancet D."/>
            <person name="Shamir R."/>
        </authorList>
    </citation>
    <scope>NUCLEOTIDE SEQUENCE [GENOMIC DNA] OF 66-282</scope>
</reference>
<reference key="8">
    <citation type="journal article" date="2004" name="Proc. Natl. Acad. Sci. U.S.A.">
        <title>The human olfactory receptor gene family.</title>
        <authorList>
            <person name="Malnic B."/>
            <person name="Godfrey P.A."/>
            <person name="Buck L.B."/>
        </authorList>
    </citation>
    <scope>IDENTIFICATION</scope>
    <scope>VARIANT VAL-48</scope>
</reference>
<feature type="chain" id="PRO_0000150480" description="Olfactory receptor 2H2">
    <location>
        <begin position="1"/>
        <end position="312"/>
    </location>
</feature>
<feature type="topological domain" description="Extracellular" evidence="1">
    <location>
        <begin position="1"/>
        <end position="23"/>
    </location>
</feature>
<feature type="transmembrane region" description="Helical; Name=1" evidence="1">
    <location>
        <begin position="24"/>
        <end position="47"/>
    </location>
</feature>
<feature type="topological domain" description="Cytoplasmic" evidence="1">
    <location>
        <begin position="48"/>
        <end position="55"/>
    </location>
</feature>
<feature type="transmembrane region" description="Helical; Name=2" evidence="1">
    <location>
        <begin position="56"/>
        <end position="77"/>
    </location>
</feature>
<feature type="topological domain" description="Extracellular" evidence="1">
    <location>
        <begin position="78"/>
        <end position="98"/>
    </location>
</feature>
<feature type="transmembrane region" description="Helical; Name=3" evidence="1">
    <location>
        <begin position="99"/>
        <end position="118"/>
    </location>
</feature>
<feature type="topological domain" description="Cytoplasmic" evidence="1">
    <location>
        <begin position="119"/>
        <end position="137"/>
    </location>
</feature>
<feature type="transmembrane region" description="Helical; Name=4" evidence="1">
    <location>
        <begin position="138"/>
        <end position="156"/>
    </location>
</feature>
<feature type="topological domain" description="Extracellular" evidence="1">
    <location>
        <begin position="157"/>
        <end position="193"/>
    </location>
</feature>
<feature type="transmembrane region" description="Helical; Name=5" evidence="1">
    <location>
        <begin position="194"/>
        <end position="217"/>
    </location>
</feature>
<feature type="topological domain" description="Cytoplasmic" evidence="1">
    <location>
        <begin position="218"/>
        <end position="234"/>
    </location>
</feature>
<feature type="transmembrane region" description="Helical; Name=6" evidence="1">
    <location>
        <begin position="235"/>
        <end position="257"/>
    </location>
</feature>
<feature type="topological domain" description="Extracellular" evidence="1">
    <location>
        <begin position="258"/>
        <end position="270"/>
    </location>
</feature>
<feature type="transmembrane region" description="Helical; Name=7" evidence="1">
    <location>
        <begin position="271"/>
        <end position="290"/>
    </location>
</feature>
<feature type="topological domain" description="Cytoplasmic" evidence="1">
    <location>
        <begin position="291"/>
        <end position="312"/>
    </location>
</feature>
<feature type="glycosylation site" description="N-linked (GlcNAc...) asparagine" evidence="1">
    <location>
        <position position="3"/>
    </location>
</feature>
<feature type="disulfide bond" evidence="2">
    <location>
        <begin position="95"/>
        <end position="187"/>
    </location>
</feature>
<feature type="sequence variant" id="VAR_058087" description="In dbSNP:rs3129034." evidence="3 4 6 8">
    <original>L</original>
    <variation>F</variation>
    <location>
        <position position="30"/>
    </location>
</feature>
<feature type="sequence variant" id="VAR_023231" description="In dbSNP:rs3129034." evidence="7">
    <original>L</original>
    <variation>I</variation>
    <location>
        <position position="30"/>
    </location>
</feature>
<feature type="sequence variant" id="VAR_010227" evidence="3">
    <original>L</original>
    <variation>S</variation>
    <location>
        <position position="30"/>
    </location>
</feature>
<feature type="sequence variant" id="VAR_057540" description="In dbSNP:rs11966382.">
    <original>V</original>
    <variation>M</variation>
    <location>
        <position position="38"/>
    </location>
</feature>
<feature type="sequence variant" id="VAR_010228" description="In dbSNP:rs1233387." evidence="3 4 5">
    <original>A</original>
    <variation>V</variation>
    <location>
        <position position="48"/>
    </location>
</feature>
<feature type="sequence variant" id="VAR_010229" description="In dbSNP:rs141430371." evidence="3">
    <original>T</original>
    <variation>A</variation>
    <location>
        <position position="220"/>
    </location>
</feature>
<feature type="sequence conflict" description="In Ref. 1; AAB36567 and 6; AAH69146." evidence="9" ref="1 6">
    <original>V</original>
    <variation>D</variation>
    <location>
        <position position="2"/>
    </location>
</feature>
<feature type="sequence conflict" description="In Ref. 1; AAB36567." evidence="9" ref="1">
    <original>E</original>
    <variation>G</variation>
    <location>
        <position position="22"/>
    </location>
</feature>
<feature type="sequence conflict" description="In Ref. 1; AAB36567." evidence="9" ref="1">
    <original>V</original>
    <variation>D</variation>
    <location>
        <position position="28"/>
    </location>
</feature>
<feature type="sequence conflict" description="In Ref. 1; AAB36567." evidence="9" ref="1">
    <original>P</original>
    <variation>T</variation>
    <location>
        <position position="51"/>
    </location>
</feature>
<feature type="sequence conflict" description="In Ref. 1; AAB36567." evidence="9" ref="1">
    <original>V</original>
    <variation>A</variation>
    <location>
        <position position="81"/>
    </location>
</feature>
<feature type="sequence conflict" description="In Ref. 1; AAB36567." evidence="9" ref="1">
    <original>LT</original>
    <variation>MK</variation>
    <location>
        <begin position="113"/>
        <end position="114"/>
    </location>
</feature>
<feature type="sequence conflict" description="In Ref. 1; AAB36567." evidence="9" ref="1">
    <original>E</original>
    <variation>G</variation>
    <location>
        <position position="153"/>
    </location>
</feature>
<feature type="sequence conflict" description="In Ref. 1; AAB36567." evidence="9" ref="1">
    <original>KGR</original>
    <variation>TAW</variation>
    <location>
        <begin position="230"/>
        <end position="232"/>
    </location>
</feature>
<feature type="sequence conflict" description="In Ref. 1; AAB36567." evidence="9" ref="1">
    <original>E</original>
    <variation>G</variation>
    <location>
        <position position="267"/>
    </location>
</feature>
<feature type="sequence conflict" description="In Ref. 1; AAB36567." evidence="9" ref="1">
    <original>I</original>
    <variation>V</variation>
    <location>
        <position position="287"/>
    </location>
</feature>
<feature type="sequence conflict" description="In Ref. 1; AAB36567." evidence="9" ref="1">
    <original>VT</original>
    <variation>IK</variation>
    <location>
        <begin position="295"/>
        <end position="296"/>
    </location>
</feature>
<feature type="sequence conflict" description="In Ref. 1; AAB36567." evidence="9" ref="1">
    <original>F</original>
    <variation>L</variation>
    <location>
        <position position="299"/>
    </location>
</feature>
<feature type="sequence conflict" description="In Ref. 1; AAB36567." evidence="9" ref="1">
    <original>MGLTQS</original>
    <variation>RDSRESWRAA</variation>
    <location>
        <begin position="307"/>
        <end position="312"/>
    </location>
</feature>
<keyword id="KW-1003">Cell membrane</keyword>
<keyword id="KW-1015">Disulfide bond</keyword>
<keyword id="KW-0297">G-protein coupled receptor</keyword>
<keyword id="KW-0325">Glycoprotein</keyword>
<keyword id="KW-0472">Membrane</keyword>
<keyword id="KW-0552">Olfaction</keyword>
<keyword id="KW-0675">Receptor</keyword>
<keyword id="KW-1185">Reference proteome</keyword>
<keyword id="KW-0716">Sensory transduction</keyword>
<keyword id="KW-0807">Transducer</keyword>
<keyword id="KW-0812">Transmembrane</keyword>
<keyword id="KW-1133">Transmembrane helix</keyword>
<organism>
    <name type="scientific">Homo sapiens</name>
    <name type="common">Human</name>
    <dbReference type="NCBI Taxonomy" id="9606"/>
    <lineage>
        <taxon>Eukaryota</taxon>
        <taxon>Metazoa</taxon>
        <taxon>Chordata</taxon>
        <taxon>Craniata</taxon>
        <taxon>Vertebrata</taxon>
        <taxon>Euteleostomi</taxon>
        <taxon>Mammalia</taxon>
        <taxon>Eutheria</taxon>
        <taxon>Euarchontoglires</taxon>
        <taxon>Primates</taxon>
        <taxon>Haplorrhini</taxon>
        <taxon>Catarrhini</taxon>
        <taxon>Hominidae</taxon>
        <taxon>Homo</taxon>
    </lineage>
</organism>
<comment type="function">
    <text evidence="9">Odorant receptor.</text>
</comment>
<comment type="subcellular location">
    <subcellularLocation>
        <location>Cell membrane</location>
        <topology>Multi-pass membrane protein</topology>
    </subcellularLocation>
</comment>
<comment type="similarity">
    <text evidence="2">Belongs to the G-protein coupled receptor 1 family.</text>
</comment>
<comment type="online information" name="Human Olfactory Receptor Data Exploratorium (HORDE)">
    <link uri="http://genome.weizmann.ac.il/horde/card/index/symbol:OR2H2"/>
</comment>
<proteinExistence type="evidence at transcript level"/>
<protein>
    <recommendedName>
        <fullName>Olfactory receptor 2H2</fullName>
    </recommendedName>
    <alternativeName>
        <fullName>Hs6M1-12</fullName>
    </alternativeName>
    <alternativeName>
        <fullName>Olfactory receptor 2H3</fullName>
    </alternativeName>
    <alternativeName>
        <fullName>Olfactory receptor-like protein FAT11</fullName>
    </alternativeName>
</protein>
<sequence length="312" mass="34763">MVNQSSTPGFLLLGFSEHPGLERTLFVVVLTSYLLTLVGNTLIILLSALDPKLHSPMYFFLSNLSFLDLCFTTSCVPQMLVNLWGPKKTISFLDCSVQIFIFLSLGTTECILLTVMAFDRYVAVCQPLHYATIIHPRLCWQLASVAWVIGLVESVVQTPSTLHLPFCPDRQVDDFVCEVPALIRLSCEDTSYNEIQVAVASVFILVVPLSLILVSYGAITWAVLRINSAKGRRKAFGTCSSHLTVVTLFYSSVIAVYLQPKNPYAQERGKFFGLFYAVGTPSLNPLIYTLRNKEVTRAFRRLLGKEMGLTQS</sequence>
<evidence type="ECO:0000255" key="1"/>
<evidence type="ECO:0000255" key="2">
    <source>
        <dbReference type="PROSITE-ProRule" id="PRU00521"/>
    </source>
</evidence>
<evidence type="ECO:0000269" key="3">
    <source>
    </source>
</evidence>
<evidence type="ECO:0000269" key="4">
    <source>
    </source>
</evidence>
<evidence type="ECO:0000269" key="5">
    <source>
    </source>
</evidence>
<evidence type="ECO:0000269" key="6">
    <source>
    </source>
</evidence>
<evidence type="ECO:0000269" key="7">
    <source>
    </source>
</evidence>
<evidence type="ECO:0000269" key="8">
    <source ref="3"/>
</evidence>
<evidence type="ECO:0000305" key="9"/>
<name>OR2H2_HUMAN</name>
<accession>O95918</accession>
<accession>Q15062</accession>
<accession>Q2M1Y3</accession>
<accession>Q5STL8</accession>
<accession>Q5SUK1</accession>
<accession>Q6IFN7</accession>
<accession>Q6NTB7</accession>
<accession>Q96R14</accession>
<gene>
    <name type="primary">OR2H2</name>
    <name type="synonym">FAT11</name>
    <name type="synonym">OLFR2</name>
    <name type="synonym">OR2H3</name>
</gene>